<comment type="function">
    <text evidence="4">Acts as a defensive agent. Recognizes blood group fucosylated oligosaccharides including A, B, H and Lewis B-type antigens. Does not recognize Lewis A antigen and has low affinity for monovalent haptens.</text>
</comment>
<comment type="subunit">
    <text evidence="2">Homotrimer.</text>
</comment>
<comment type="subcellular location">
    <subcellularLocation>
        <location evidence="4">Secreted</location>
        <location evidence="4">Extracellular space</location>
    </subcellularLocation>
</comment>
<comment type="tissue specificity">
    <text evidence="4">Parenchymal hepatocytes.</text>
</comment>
<comment type="miscellaneous">
    <text evidence="1">Binds 1 calcium ion per monomer.</text>
</comment>
<comment type="similarity">
    <text evidence="5">Belongs to the fucolectin family.</text>
</comment>
<keyword id="KW-0106">Calcium</keyword>
<keyword id="KW-1015">Disulfide bond</keyword>
<keyword id="KW-0430">Lectin</keyword>
<keyword id="KW-0479">Metal-binding</keyword>
<keyword id="KW-0964">Secreted</keyword>
<keyword id="KW-0732">Signal</keyword>
<protein>
    <recommendedName>
        <fullName>Fucolectin-2</fullName>
    </recommendedName>
</protein>
<accession>Q9I930</accession>
<dbReference type="EMBL" id="AB037868">
    <property type="protein sequence ID" value="BAB03524.1"/>
    <property type="molecule type" value="mRNA"/>
</dbReference>
<dbReference type="SMR" id="Q9I930"/>
<dbReference type="CAZy" id="CBM47">
    <property type="family name" value="Carbohydrate-Binding Module Family 47"/>
</dbReference>
<dbReference type="GO" id="GO:0005615">
    <property type="term" value="C:extracellular space"/>
    <property type="evidence" value="ECO:0000314"/>
    <property type="project" value="UniProtKB"/>
</dbReference>
<dbReference type="GO" id="GO:0005509">
    <property type="term" value="F:calcium ion binding"/>
    <property type="evidence" value="ECO:0000250"/>
    <property type="project" value="UniProtKB"/>
</dbReference>
<dbReference type="GO" id="GO:0030246">
    <property type="term" value="F:carbohydrate binding"/>
    <property type="evidence" value="ECO:0000314"/>
    <property type="project" value="UniProtKB"/>
</dbReference>
<dbReference type="GO" id="GO:0042806">
    <property type="term" value="F:fucose binding"/>
    <property type="evidence" value="ECO:0000314"/>
    <property type="project" value="UniProtKB"/>
</dbReference>
<dbReference type="GO" id="GO:0010185">
    <property type="term" value="P:regulation of cellular defense response"/>
    <property type="evidence" value="ECO:0000304"/>
    <property type="project" value="UniProtKB"/>
</dbReference>
<dbReference type="GO" id="GO:0001868">
    <property type="term" value="P:regulation of complement activation, lectin pathway"/>
    <property type="evidence" value="ECO:0000304"/>
    <property type="project" value="UniProtKB"/>
</dbReference>
<dbReference type="GO" id="GO:0045088">
    <property type="term" value="P:regulation of innate immune response"/>
    <property type="evidence" value="ECO:0000304"/>
    <property type="project" value="UniProtKB"/>
</dbReference>
<dbReference type="FunFam" id="2.60.120.260:FF:000183">
    <property type="entry name" value="Fucolectin"/>
    <property type="match status" value="1"/>
</dbReference>
<dbReference type="Gene3D" id="2.60.120.260">
    <property type="entry name" value="Galactose-binding domain-like"/>
    <property type="match status" value="1"/>
</dbReference>
<dbReference type="InterPro" id="IPR051941">
    <property type="entry name" value="BG_Antigen-Binding_Lectin"/>
</dbReference>
<dbReference type="InterPro" id="IPR006585">
    <property type="entry name" value="FTP1"/>
</dbReference>
<dbReference type="InterPro" id="IPR008979">
    <property type="entry name" value="Galactose-bd-like_sf"/>
</dbReference>
<dbReference type="PANTHER" id="PTHR45713">
    <property type="entry name" value="FTP DOMAIN-CONTAINING PROTEIN"/>
    <property type="match status" value="1"/>
</dbReference>
<dbReference type="PANTHER" id="PTHR45713:SF8">
    <property type="entry name" value="SI:CH211-215K15.4"/>
    <property type="match status" value="1"/>
</dbReference>
<dbReference type="Pfam" id="PF22633">
    <property type="entry name" value="F5_F8_type_C_2"/>
    <property type="match status" value="1"/>
</dbReference>
<dbReference type="SMART" id="SM00607">
    <property type="entry name" value="FTP"/>
    <property type="match status" value="1"/>
</dbReference>
<dbReference type="SUPFAM" id="SSF49785">
    <property type="entry name" value="Galactose-binding domain-like"/>
    <property type="match status" value="1"/>
</dbReference>
<evidence type="ECO:0000250" key="1"/>
<evidence type="ECO:0000250" key="2">
    <source>
        <dbReference type="UniProtKB" id="Q7SIC1"/>
    </source>
</evidence>
<evidence type="ECO:0000255" key="3"/>
<evidence type="ECO:0000269" key="4">
    <source>
    </source>
</evidence>
<evidence type="ECO:0000305" key="5"/>
<evidence type="ECO:0000312" key="6">
    <source>
        <dbReference type="EMBL" id="BAB03524.1"/>
    </source>
</evidence>
<sequence length="180" mass="19776">MKVKMIMLLFQILAILTLKSDSADVPDGYIQENVALRGRATQSAQLRGEHAGISHASNAIDGNRDSYFYHGSCSHTEGDNPLWRVDLLQVYTITSVTITNRGDCCGERISGARILIGKHLENNGINNPECSTINIMAAGETRTFHCPQPMIGRYVTVYLPKTGTLHLCEVEVNVLFPAPC</sequence>
<reference evidence="5 6" key="1">
    <citation type="journal article" date="2000" name="J. Biol. Chem.">
        <title>Multiplicity, structures, and endocrine and exocrine natures of eel fucose-binding lectins.</title>
        <authorList>
            <person name="Honda S."/>
            <person name="Kashiwagi M."/>
            <person name="Miyamoto K."/>
            <person name="Takei Y."/>
            <person name="Hirose S."/>
        </authorList>
    </citation>
    <scope>NUCLEOTIDE SEQUENCE [MRNA]</scope>
    <scope>FUNCTION</scope>
    <scope>SUBCELLULAR LOCATION</scope>
    <scope>TISSUE SPECIFICITY</scope>
    <source>
        <tissue evidence="6">Liver</tissue>
    </source>
</reference>
<proteinExistence type="evidence at transcript level"/>
<name>FUCL2_ANGJA</name>
<feature type="signal peptide" evidence="3">
    <location>
        <begin position="1"/>
        <end position="22"/>
    </location>
</feature>
<feature type="chain" id="PRO_0000223933" description="Fucolectin-2" evidence="5">
    <location>
        <begin position="23"/>
        <end position="180"/>
    </location>
</feature>
<feature type="region of interest" description="F5/8 type C-like">
    <location>
        <begin position="31"/>
        <end position="179"/>
    </location>
</feature>
<feature type="short sequence motif" description="Cell attachment site" evidence="3">
    <location>
        <begin position="101"/>
        <end position="103"/>
    </location>
</feature>
<feature type="binding site" evidence="1">
    <location>
        <position position="58"/>
    </location>
    <ligand>
        <name>Ca(2+)</name>
        <dbReference type="ChEBI" id="CHEBI:29108"/>
    </ligand>
</feature>
<feature type="binding site" evidence="2">
    <location>
        <position position="61"/>
    </location>
    <ligand>
        <name>Ca(2+)</name>
        <dbReference type="ChEBI" id="CHEBI:29108"/>
    </ligand>
</feature>
<feature type="binding site" evidence="1">
    <location>
        <position position="63"/>
    </location>
    <ligand>
        <name>Ca(2+)</name>
        <dbReference type="ChEBI" id="CHEBI:29108"/>
    </ligand>
</feature>
<feature type="binding site" evidence="2">
    <location>
        <position position="72"/>
    </location>
    <ligand>
        <name>Ca(2+)</name>
        <dbReference type="ChEBI" id="CHEBI:29108"/>
    </ligand>
</feature>
<feature type="binding site" evidence="2">
    <location>
        <position position="75"/>
    </location>
    <ligand>
        <name>alpha-L-fucose</name>
        <dbReference type="ChEBI" id="CHEBI:42548"/>
    </ligand>
</feature>
<feature type="binding site" evidence="2">
    <location>
        <position position="101"/>
    </location>
    <ligand>
        <name>alpha-L-fucose</name>
        <dbReference type="ChEBI" id="CHEBI:42548"/>
    </ligand>
</feature>
<feature type="binding site" evidence="2">
    <location>
        <position position="108"/>
    </location>
    <ligand>
        <name>alpha-L-fucose</name>
        <dbReference type="ChEBI" id="CHEBI:42548"/>
    </ligand>
</feature>
<feature type="binding site" evidence="1">
    <location>
        <position position="168"/>
    </location>
    <ligand>
        <name>Ca(2+)</name>
        <dbReference type="ChEBI" id="CHEBI:29108"/>
    </ligand>
</feature>
<feature type="binding site" evidence="2">
    <location>
        <position position="169"/>
    </location>
    <ligand>
        <name>Ca(2+)</name>
        <dbReference type="ChEBI" id="CHEBI:29108"/>
    </ligand>
</feature>
<feature type="disulfide bond" evidence="2">
    <location>
        <begin position="73"/>
        <end position="168"/>
    </location>
</feature>
<feature type="disulfide bond" evidence="2">
    <location>
        <begin position="104"/>
        <end position="105"/>
    </location>
</feature>
<feature type="disulfide bond" evidence="2">
    <location>
        <begin position="130"/>
        <end position="146"/>
    </location>
</feature>
<organism>
    <name type="scientific">Anguilla japonica</name>
    <name type="common">Japanese eel</name>
    <dbReference type="NCBI Taxonomy" id="7937"/>
    <lineage>
        <taxon>Eukaryota</taxon>
        <taxon>Metazoa</taxon>
        <taxon>Chordata</taxon>
        <taxon>Craniata</taxon>
        <taxon>Vertebrata</taxon>
        <taxon>Euteleostomi</taxon>
        <taxon>Actinopterygii</taxon>
        <taxon>Neopterygii</taxon>
        <taxon>Teleostei</taxon>
        <taxon>Anguilliformes</taxon>
        <taxon>Anguillidae</taxon>
        <taxon>Anguilla</taxon>
    </lineage>
</organism>